<evidence type="ECO:0000255" key="1">
    <source>
        <dbReference type="HAMAP-Rule" id="MF_01307"/>
    </source>
</evidence>
<evidence type="ECO:0000305" key="2"/>
<feature type="chain" id="PRO_0000323218" description="Small ribosomal subunit protein uS5">
    <location>
        <begin position="1"/>
        <end position="166"/>
    </location>
</feature>
<feature type="domain" description="S5 DRBM" evidence="1">
    <location>
        <begin position="11"/>
        <end position="74"/>
    </location>
</feature>
<reference key="1">
    <citation type="submission" date="2006-10" db="EMBL/GenBank/DDBJ databases">
        <title>Complete sequence of Syntrophobacter fumaroxidans MPOB.</title>
        <authorList>
            <consortium name="US DOE Joint Genome Institute"/>
            <person name="Copeland A."/>
            <person name="Lucas S."/>
            <person name="Lapidus A."/>
            <person name="Barry K."/>
            <person name="Detter J.C."/>
            <person name="Glavina del Rio T."/>
            <person name="Hammon N."/>
            <person name="Israni S."/>
            <person name="Pitluck S."/>
            <person name="Goltsman E.G."/>
            <person name="Martinez M."/>
            <person name="Schmutz J."/>
            <person name="Larimer F."/>
            <person name="Land M."/>
            <person name="Hauser L."/>
            <person name="Kyrpides N."/>
            <person name="Kim E."/>
            <person name="Boone D.R."/>
            <person name="Brockman F."/>
            <person name="Culley D."/>
            <person name="Ferry J."/>
            <person name="Gunsalus R."/>
            <person name="McInerney M.J."/>
            <person name="Morrison M."/>
            <person name="Plugge C."/>
            <person name="Rohlin L."/>
            <person name="Scholten J."/>
            <person name="Sieber J."/>
            <person name="Stams A.J.M."/>
            <person name="Worm P."/>
            <person name="Henstra A.M."/>
            <person name="Richardson P."/>
        </authorList>
    </citation>
    <scope>NUCLEOTIDE SEQUENCE [LARGE SCALE GENOMIC DNA]</scope>
    <source>
        <strain>DSM 10017 / MPOB</strain>
    </source>
</reference>
<protein>
    <recommendedName>
        <fullName evidence="1">Small ribosomal subunit protein uS5</fullName>
    </recommendedName>
    <alternativeName>
        <fullName evidence="2">30S ribosomal protein S5</fullName>
    </alternativeName>
</protein>
<organism>
    <name type="scientific">Syntrophobacter fumaroxidans (strain DSM 10017 / MPOB)</name>
    <dbReference type="NCBI Taxonomy" id="335543"/>
    <lineage>
        <taxon>Bacteria</taxon>
        <taxon>Pseudomonadati</taxon>
        <taxon>Thermodesulfobacteriota</taxon>
        <taxon>Syntrophobacteria</taxon>
        <taxon>Syntrophobacterales</taxon>
        <taxon>Syntrophobacteraceae</taxon>
        <taxon>Syntrophobacter</taxon>
    </lineage>
</organism>
<dbReference type="EMBL" id="CP000478">
    <property type="protein sequence ID" value="ABK17259.1"/>
    <property type="molecule type" value="Genomic_DNA"/>
</dbReference>
<dbReference type="RefSeq" id="WP_011698429.1">
    <property type="nucleotide sequence ID" value="NC_008554.1"/>
</dbReference>
<dbReference type="SMR" id="A0LIK7"/>
<dbReference type="FunCoup" id="A0LIK7">
    <property type="interactions" value="697"/>
</dbReference>
<dbReference type="STRING" id="335543.Sfum_1572"/>
<dbReference type="KEGG" id="sfu:Sfum_1572"/>
<dbReference type="eggNOG" id="COG0098">
    <property type="taxonomic scope" value="Bacteria"/>
</dbReference>
<dbReference type="HOGENOM" id="CLU_065898_2_2_7"/>
<dbReference type="InParanoid" id="A0LIK7"/>
<dbReference type="OrthoDB" id="9809045at2"/>
<dbReference type="Proteomes" id="UP000001784">
    <property type="component" value="Chromosome"/>
</dbReference>
<dbReference type="GO" id="GO:0015935">
    <property type="term" value="C:small ribosomal subunit"/>
    <property type="evidence" value="ECO:0007669"/>
    <property type="project" value="InterPro"/>
</dbReference>
<dbReference type="GO" id="GO:0019843">
    <property type="term" value="F:rRNA binding"/>
    <property type="evidence" value="ECO:0007669"/>
    <property type="project" value="UniProtKB-UniRule"/>
</dbReference>
<dbReference type="GO" id="GO:0003735">
    <property type="term" value="F:structural constituent of ribosome"/>
    <property type="evidence" value="ECO:0007669"/>
    <property type="project" value="InterPro"/>
</dbReference>
<dbReference type="GO" id="GO:0006412">
    <property type="term" value="P:translation"/>
    <property type="evidence" value="ECO:0007669"/>
    <property type="project" value="UniProtKB-UniRule"/>
</dbReference>
<dbReference type="FunFam" id="3.30.160.20:FF:000001">
    <property type="entry name" value="30S ribosomal protein S5"/>
    <property type="match status" value="1"/>
</dbReference>
<dbReference type="FunFam" id="3.30.230.10:FF:000002">
    <property type="entry name" value="30S ribosomal protein S5"/>
    <property type="match status" value="1"/>
</dbReference>
<dbReference type="Gene3D" id="3.30.160.20">
    <property type="match status" value="1"/>
</dbReference>
<dbReference type="Gene3D" id="3.30.230.10">
    <property type="match status" value="1"/>
</dbReference>
<dbReference type="HAMAP" id="MF_01307_B">
    <property type="entry name" value="Ribosomal_uS5_B"/>
    <property type="match status" value="1"/>
</dbReference>
<dbReference type="InterPro" id="IPR020568">
    <property type="entry name" value="Ribosomal_Su5_D2-typ_SF"/>
</dbReference>
<dbReference type="InterPro" id="IPR000851">
    <property type="entry name" value="Ribosomal_uS5"/>
</dbReference>
<dbReference type="InterPro" id="IPR005712">
    <property type="entry name" value="Ribosomal_uS5_bac-type"/>
</dbReference>
<dbReference type="InterPro" id="IPR005324">
    <property type="entry name" value="Ribosomal_uS5_C"/>
</dbReference>
<dbReference type="InterPro" id="IPR013810">
    <property type="entry name" value="Ribosomal_uS5_N"/>
</dbReference>
<dbReference type="InterPro" id="IPR018192">
    <property type="entry name" value="Ribosomal_uS5_N_CS"/>
</dbReference>
<dbReference type="InterPro" id="IPR014721">
    <property type="entry name" value="Ribsml_uS5_D2-typ_fold_subgr"/>
</dbReference>
<dbReference type="NCBIfam" id="TIGR01021">
    <property type="entry name" value="rpsE_bact"/>
    <property type="match status" value="1"/>
</dbReference>
<dbReference type="PANTHER" id="PTHR48277">
    <property type="entry name" value="MITOCHONDRIAL RIBOSOMAL PROTEIN S5"/>
    <property type="match status" value="1"/>
</dbReference>
<dbReference type="PANTHER" id="PTHR48277:SF1">
    <property type="entry name" value="MITOCHONDRIAL RIBOSOMAL PROTEIN S5"/>
    <property type="match status" value="1"/>
</dbReference>
<dbReference type="Pfam" id="PF00333">
    <property type="entry name" value="Ribosomal_S5"/>
    <property type="match status" value="1"/>
</dbReference>
<dbReference type="Pfam" id="PF03719">
    <property type="entry name" value="Ribosomal_S5_C"/>
    <property type="match status" value="1"/>
</dbReference>
<dbReference type="SUPFAM" id="SSF54768">
    <property type="entry name" value="dsRNA-binding domain-like"/>
    <property type="match status" value="1"/>
</dbReference>
<dbReference type="SUPFAM" id="SSF54211">
    <property type="entry name" value="Ribosomal protein S5 domain 2-like"/>
    <property type="match status" value="1"/>
</dbReference>
<dbReference type="PROSITE" id="PS00585">
    <property type="entry name" value="RIBOSOMAL_S5"/>
    <property type="match status" value="1"/>
</dbReference>
<dbReference type="PROSITE" id="PS50881">
    <property type="entry name" value="S5_DSRBD"/>
    <property type="match status" value="1"/>
</dbReference>
<accession>A0LIK7</accession>
<sequence length="166" mass="17691">MIALESSQLQLIDKVVHISRVAKVVKGGRRFSFSAIVVVGDGNGRVGFSLGKANEVPEAIRKGMESAKRTMFEVPLVNATIPHEVLGRFGAASVVLKPASAGTGVIAGGAVRAIMEAAGIHNILTKCIGSRNPHNVVKATLEGLRRLRNVELVAKLRGREVHEIRD</sequence>
<gene>
    <name evidence="1" type="primary">rpsE</name>
    <name type="ordered locus">Sfum_1572</name>
</gene>
<keyword id="KW-1185">Reference proteome</keyword>
<keyword id="KW-0687">Ribonucleoprotein</keyword>
<keyword id="KW-0689">Ribosomal protein</keyword>
<keyword id="KW-0694">RNA-binding</keyword>
<keyword id="KW-0699">rRNA-binding</keyword>
<name>RS5_SYNFM</name>
<proteinExistence type="inferred from homology"/>
<comment type="function">
    <text evidence="1">With S4 and S12 plays an important role in translational accuracy.</text>
</comment>
<comment type="function">
    <text evidence="1">Located at the back of the 30S subunit body where it stabilizes the conformation of the head with respect to the body.</text>
</comment>
<comment type="subunit">
    <text evidence="1">Part of the 30S ribosomal subunit. Contacts proteins S4 and S8.</text>
</comment>
<comment type="domain">
    <text>The N-terminal domain interacts with the head of the 30S subunit; the C-terminal domain interacts with the body and contacts protein S4. The interaction surface between S4 and S5 is involved in control of translational fidelity.</text>
</comment>
<comment type="similarity">
    <text evidence="1">Belongs to the universal ribosomal protein uS5 family.</text>
</comment>